<accession>P50340</accession>
<dbReference type="EC" id="3.4.21.-"/>
<dbReference type="EMBL" id="D45173">
    <property type="protein sequence ID" value="BAA08121.1"/>
    <property type="molecule type" value="mRNA"/>
</dbReference>
<dbReference type="PIR" id="S64707">
    <property type="entry name" value="S64707"/>
</dbReference>
<dbReference type="RefSeq" id="XP_021519334.1">
    <property type="nucleotide sequence ID" value="XM_021663659.2"/>
</dbReference>
<dbReference type="SMR" id="P50340"/>
<dbReference type="MEROPS" id="S01.149"/>
<dbReference type="Ensembl" id="ENSMUGT00000026041">
    <property type="protein sequence ID" value="ENSMUGP00000022704"/>
    <property type="gene ID" value="ENSMUGG00000019009"/>
</dbReference>
<dbReference type="GeneID" id="110565884"/>
<dbReference type="OrthoDB" id="5565075at2759"/>
<dbReference type="GO" id="GO:0005737">
    <property type="term" value="C:cytoplasm"/>
    <property type="evidence" value="ECO:0007669"/>
    <property type="project" value="TreeGrafter"/>
</dbReference>
<dbReference type="GO" id="GO:0005615">
    <property type="term" value="C:extracellular space"/>
    <property type="evidence" value="ECO:0007669"/>
    <property type="project" value="TreeGrafter"/>
</dbReference>
<dbReference type="GO" id="GO:0043231">
    <property type="term" value="C:intracellular membrane-bounded organelle"/>
    <property type="evidence" value="ECO:0007669"/>
    <property type="project" value="TreeGrafter"/>
</dbReference>
<dbReference type="GO" id="GO:0004252">
    <property type="term" value="F:serine-type endopeptidase activity"/>
    <property type="evidence" value="ECO:0007669"/>
    <property type="project" value="InterPro"/>
</dbReference>
<dbReference type="GO" id="GO:0006508">
    <property type="term" value="P:proteolysis"/>
    <property type="evidence" value="ECO:0007669"/>
    <property type="project" value="UniProtKB-KW"/>
</dbReference>
<dbReference type="CDD" id="cd00190">
    <property type="entry name" value="Tryp_SPc"/>
    <property type="match status" value="1"/>
</dbReference>
<dbReference type="FunFam" id="2.40.10.10:FF:000416">
    <property type="match status" value="1"/>
</dbReference>
<dbReference type="FunFam" id="2.40.10.10:FF:000005">
    <property type="entry name" value="Serine protease 37"/>
    <property type="match status" value="1"/>
</dbReference>
<dbReference type="Gene3D" id="2.40.10.10">
    <property type="entry name" value="Trypsin-like serine proteases"/>
    <property type="match status" value="2"/>
</dbReference>
<dbReference type="InterPro" id="IPR009003">
    <property type="entry name" value="Peptidase_S1_PA"/>
</dbReference>
<dbReference type="InterPro" id="IPR043504">
    <property type="entry name" value="Peptidase_S1_PA_chymotrypsin"/>
</dbReference>
<dbReference type="InterPro" id="IPR001314">
    <property type="entry name" value="Peptidase_S1A"/>
</dbReference>
<dbReference type="InterPro" id="IPR001254">
    <property type="entry name" value="Trypsin_dom"/>
</dbReference>
<dbReference type="InterPro" id="IPR018114">
    <property type="entry name" value="TRYPSIN_HIS"/>
</dbReference>
<dbReference type="InterPro" id="IPR033116">
    <property type="entry name" value="TRYPSIN_SER"/>
</dbReference>
<dbReference type="PANTHER" id="PTHR24271:SF23">
    <property type="entry name" value="CHYMASE 2, MAST CELL-RELATED"/>
    <property type="match status" value="1"/>
</dbReference>
<dbReference type="PANTHER" id="PTHR24271">
    <property type="entry name" value="KALLIKREIN-RELATED"/>
    <property type="match status" value="1"/>
</dbReference>
<dbReference type="Pfam" id="PF00089">
    <property type="entry name" value="Trypsin"/>
    <property type="match status" value="1"/>
</dbReference>
<dbReference type="PRINTS" id="PR00722">
    <property type="entry name" value="CHYMOTRYPSIN"/>
</dbReference>
<dbReference type="SMART" id="SM00020">
    <property type="entry name" value="Tryp_SPc"/>
    <property type="match status" value="1"/>
</dbReference>
<dbReference type="SUPFAM" id="SSF50494">
    <property type="entry name" value="Trypsin-like serine proteases"/>
    <property type="match status" value="1"/>
</dbReference>
<dbReference type="PROSITE" id="PS50240">
    <property type="entry name" value="TRYPSIN_DOM"/>
    <property type="match status" value="1"/>
</dbReference>
<dbReference type="PROSITE" id="PS00134">
    <property type="entry name" value="TRYPSIN_HIS"/>
    <property type="match status" value="1"/>
</dbReference>
<dbReference type="PROSITE" id="PS00135">
    <property type="entry name" value="TRYPSIN_SER"/>
    <property type="match status" value="1"/>
</dbReference>
<evidence type="ECO:0000250" key="1"/>
<evidence type="ECO:0000255" key="2">
    <source>
        <dbReference type="PROSITE-ProRule" id="PRU00274"/>
    </source>
</evidence>
<proteinExistence type="evidence at transcript level"/>
<organism>
    <name type="scientific">Meriones unguiculatus</name>
    <name type="common">Mongolian jird</name>
    <name type="synonym">Gerbillus unguiculatus</name>
    <dbReference type="NCBI Taxonomy" id="10047"/>
    <lineage>
        <taxon>Eukaryota</taxon>
        <taxon>Metazoa</taxon>
        <taxon>Chordata</taxon>
        <taxon>Craniata</taxon>
        <taxon>Vertebrata</taxon>
        <taxon>Euteleostomi</taxon>
        <taxon>Mammalia</taxon>
        <taxon>Eutheria</taxon>
        <taxon>Euarchontoglires</taxon>
        <taxon>Glires</taxon>
        <taxon>Rodentia</taxon>
        <taxon>Myomorpha</taxon>
        <taxon>Muroidea</taxon>
        <taxon>Muridae</taxon>
        <taxon>Gerbillinae</taxon>
        <taxon>Meriones</taxon>
    </lineage>
</organism>
<name>MCPT1_MERUN</name>
<reference key="1">
    <citation type="journal article" date="1996" name="Biochem. J.">
        <title>Cloning of the cDNAs for mast-cell chymases from the jejunum of Mongolian gerbils, Meriones unguiculatus, and their sequence similarities with chymases expressed in the connective-tissue mast cells of mice and rats.</title>
        <authorList>
            <person name="Itoh H."/>
            <person name="Murakumo Y."/>
            <person name="Tomita M."/>
            <person name="Ide H."/>
            <person name="Kobayashi T."/>
            <person name="Maruyama H."/>
            <person name="Horii Y."/>
            <person name="Nawa Y."/>
        </authorList>
    </citation>
    <scope>NUCLEOTIDE SEQUENCE [MRNA]</scope>
    <source>
        <strain>MGS/SEA</strain>
        <tissue>Intestine</tissue>
    </source>
</reference>
<feature type="signal peptide" evidence="1">
    <location>
        <begin position="1"/>
        <end position="18"/>
    </location>
</feature>
<feature type="propeptide" id="PRO_0000027463" description="Activation peptide" evidence="1">
    <location>
        <begin position="19"/>
        <end position="20"/>
    </location>
</feature>
<feature type="chain" id="PRO_0000027464" description="Mast cell protease 1">
    <location>
        <begin position="21"/>
        <end position="246"/>
    </location>
</feature>
<feature type="domain" description="Peptidase S1" evidence="2">
    <location>
        <begin position="21"/>
        <end position="244"/>
    </location>
</feature>
<feature type="active site" description="Charge relay system" evidence="1">
    <location>
        <position position="65"/>
    </location>
</feature>
<feature type="active site" description="Charge relay system" evidence="1">
    <location>
        <position position="109"/>
    </location>
</feature>
<feature type="active site" description="Charge relay system" evidence="1">
    <location>
        <position position="202"/>
    </location>
</feature>
<feature type="disulfide bond" evidence="2">
    <location>
        <begin position="50"/>
        <end position="66"/>
    </location>
</feature>
<feature type="disulfide bond" evidence="2">
    <location>
        <begin position="143"/>
        <end position="208"/>
    </location>
</feature>
<feature type="disulfide bond" evidence="2">
    <location>
        <begin position="174"/>
        <end position="187"/>
    </location>
</feature>
<comment type="similarity">
    <text evidence="2">Belongs to the peptidase S1 family. Granzyme subfamily.</text>
</comment>
<sequence length="246" mass="26813">MQALLFLLALLWPPEAGAEEIIGGVESKPHSRPYMAHLTITTKQGFTASCGGFLINPQFVMTAAHCKGREITVTLGAHDVSKKESTQQKIKVAKQIAHPSYSFYSNLHDIMLLKLQKKAKVTASVDVISLPSPSDFINPGKVCRAAGWGRTGVTEPTSDKLREVKLRIMTKAACKNYEHYDYNFQVCVGSPSKIRSAYKGDSGGPLVCAGVAHGIVSYGRIDAKPPAVFTRISPYVPWINLVIRGK</sequence>
<keyword id="KW-1015">Disulfide bond</keyword>
<keyword id="KW-0378">Hydrolase</keyword>
<keyword id="KW-0645">Protease</keyword>
<keyword id="KW-0720">Serine protease</keyword>
<keyword id="KW-0732">Signal</keyword>
<keyword id="KW-0865">Zymogen</keyword>
<protein>
    <recommendedName>
        <fullName>Mast cell protease 1</fullName>
        <ecNumber>3.4.21.-</ecNumber>
    </recommendedName>
</protein>